<proteinExistence type="evidence at protein level"/>
<organism>
    <name type="scientific">Saccharomyces cerevisiae (strain ATCC 204508 / S288c)</name>
    <name type="common">Baker's yeast</name>
    <dbReference type="NCBI Taxonomy" id="559292"/>
    <lineage>
        <taxon>Eukaryota</taxon>
        <taxon>Fungi</taxon>
        <taxon>Dikarya</taxon>
        <taxon>Ascomycota</taxon>
        <taxon>Saccharomycotina</taxon>
        <taxon>Saccharomycetes</taxon>
        <taxon>Saccharomycetales</taxon>
        <taxon>Saccharomycetaceae</taxon>
        <taxon>Saccharomyces</taxon>
    </lineage>
</organism>
<feature type="initiator methionine" description="Removed" evidence="11">
    <location>
        <position position="1"/>
    </location>
</feature>
<feature type="chain" id="PRO_0000084522" description="Protein LTV1">
    <location>
        <begin position="2"/>
        <end position="463"/>
    </location>
</feature>
<feature type="region of interest" description="Disordered" evidence="2">
    <location>
        <begin position="37"/>
        <end position="63"/>
    </location>
</feature>
<feature type="region of interest" description="Disordered" evidence="2">
    <location>
        <begin position="284"/>
        <end position="345"/>
    </location>
</feature>
<feature type="region of interest" description="Disordered" evidence="2">
    <location>
        <begin position="426"/>
        <end position="463"/>
    </location>
</feature>
<feature type="coiled-coil region" evidence="1">
    <location>
        <begin position="355"/>
        <end position="462"/>
    </location>
</feature>
<feature type="short sequence motif" description="Nuclear export signal">
    <location>
        <begin position="168"/>
        <end position="179"/>
    </location>
</feature>
<feature type="compositionally biased region" description="Basic and acidic residues" evidence="2">
    <location>
        <begin position="46"/>
        <end position="56"/>
    </location>
</feature>
<feature type="compositionally biased region" description="Basic residues" evidence="2">
    <location>
        <begin position="321"/>
        <end position="332"/>
    </location>
</feature>
<feature type="compositionally biased region" description="Low complexity" evidence="2">
    <location>
        <begin position="336"/>
        <end position="345"/>
    </location>
</feature>
<feature type="compositionally biased region" description="Basic and acidic residues" evidence="2">
    <location>
        <begin position="444"/>
        <end position="453"/>
    </location>
</feature>
<feature type="compositionally biased region" description="Polar residues" evidence="2">
    <location>
        <begin position="454"/>
        <end position="463"/>
    </location>
</feature>
<feature type="modified residue" description="N-acetylserine" evidence="11">
    <location>
        <position position="2"/>
    </location>
</feature>
<feature type="modified residue" description="Phosphoserine" evidence="10">
    <location>
        <position position="288"/>
    </location>
</feature>
<feature type="modified residue" description="Phosphoserine" evidence="10">
    <location>
        <position position="293"/>
    </location>
</feature>
<feature type="modified residue" description="Phosphoserine" evidence="10">
    <location>
        <position position="299"/>
    </location>
</feature>
<feature type="modified residue" description="Phosphoserine" evidence="9 10">
    <location>
        <position position="303"/>
    </location>
</feature>
<feature type="helix" evidence="12">
    <location>
        <begin position="361"/>
        <end position="369"/>
    </location>
</feature>
<feature type="helix" evidence="12">
    <location>
        <begin position="371"/>
        <end position="382"/>
    </location>
</feature>
<feature type="helix" evidence="12">
    <location>
        <begin position="388"/>
        <end position="390"/>
    </location>
</feature>
<feature type="helix" evidence="12">
    <location>
        <begin position="395"/>
        <end position="402"/>
    </location>
</feature>
<name>LTV1_YEAST</name>
<accession>P34078</accession>
<accession>D6VX53</accession>
<comment type="function">
    <text evidence="4 7">Involved in protein transport. Non-ribosomal factor required for efficient nuclear export of the ribosomal 40S subunit. Component of the GSE complex, a GTPase complex required for intracellular sorting of GAP1 out of the endosome.</text>
</comment>
<comment type="subunit">
    <text evidence="5 6 7">Associates with the pre-40S ribosomal subunit. Component of the GSE complex composed of GTR1, GTR2, SLM4, MEH1 and LTV1. Interacts directly with GTR1. Interacts with CRM1.</text>
</comment>
<comment type="interaction">
    <interactant intactId="EBI-10248">
        <id>P34078</id>
    </interactant>
    <interactant intactId="EBI-29124">
        <id>P40160</id>
        <label>RIO2</label>
    </interactant>
    <organismsDiffer>false</organismsDiffer>
    <experiments>5</experiments>
</comment>
<comment type="interaction">
    <interactant intactId="EBI-10248">
        <id>P34078</id>
    </interactant>
    <interactant intactId="EBI-16140">
        <id>P05750</id>
        <label>RPS3</label>
    </interactant>
    <organismsDiffer>false</organismsDiffer>
    <experiments>2</experiments>
</comment>
<comment type="subcellular location">
    <subcellularLocation>
        <location>Nucleus</location>
    </subcellularLocation>
    <subcellularLocation>
        <location>Cytoplasm</location>
    </subcellularLocation>
    <text>Shuttles between the nucleus and the cytoplasm.</text>
</comment>
<comment type="PTM">
    <text evidence="6">Phosphorylated, leading to its dissociation from the 40S pre-40S ribosome.</text>
</comment>
<comment type="miscellaneous">
    <text evidence="3">Present with 589 molecules/cell in log phase SD medium.</text>
</comment>
<comment type="similarity">
    <text evidence="8">Belongs to the LTV1 family.</text>
</comment>
<comment type="sequence caution" evidence="8">
    <conflict type="frameshift">
        <sequence resource="EMBL-CDS" id="CAA80955"/>
    </conflict>
</comment>
<gene>
    <name type="primary">LTV1</name>
    <name type="ordered locus">YKL143W</name>
    <name type="ORF">YKL2</name>
</gene>
<protein>
    <recommendedName>
        <fullName>Protein LTV1</fullName>
    </recommendedName>
    <alternativeName>
        <fullName>Low-temperature viability protein 1</fullName>
    </alternativeName>
</protein>
<keyword id="KW-0002">3D-structure</keyword>
<keyword id="KW-0007">Acetylation</keyword>
<keyword id="KW-0175">Coiled coil</keyword>
<keyword id="KW-0963">Cytoplasm</keyword>
<keyword id="KW-0539">Nucleus</keyword>
<keyword id="KW-0597">Phosphoprotein</keyword>
<keyword id="KW-0653">Protein transport</keyword>
<keyword id="KW-1185">Reference proteome</keyword>
<keyword id="KW-0813">Transport</keyword>
<evidence type="ECO:0000255" key="1"/>
<evidence type="ECO:0000256" key="2">
    <source>
        <dbReference type="SAM" id="MobiDB-lite"/>
    </source>
</evidence>
<evidence type="ECO:0000269" key="3">
    <source>
    </source>
</evidence>
<evidence type="ECO:0000269" key="4">
    <source>
    </source>
</evidence>
<evidence type="ECO:0000269" key="5">
    <source>
    </source>
</evidence>
<evidence type="ECO:0000269" key="6">
    <source>
    </source>
</evidence>
<evidence type="ECO:0000269" key="7">
    <source>
    </source>
</evidence>
<evidence type="ECO:0000305" key="8"/>
<evidence type="ECO:0007744" key="9">
    <source>
    </source>
</evidence>
<evidence type="ECO:0007744" key="10">
    <source>
    </source>
</evidence>
<evidence type="ECO:0007744" key="11">
    <source>
    </source>
</evidence>
<evidence type="ECO:0007829" key="12">
    <source>
        <dbReference type="PDB" id="5WWO"/>
    </source>
</evidence>
<reference key="1">
    <citation type="journal article" date="1992" name="Yeast">
        <title>Molecular cloning and physical analysis of an 8.2 kb segment of chromosome XI of Saccharomyces cerevisiae reveals five tightly linked genes.</title>
        <authorList>
            <person name="Abraham P.R."/>
            <person name="Mulder A."/>
            <person name="Van'T Riet J."/>
            <person name="Planta R.J."/>
            <person name="Raue H.A."/>
        </authorList>
    </citation>
    <scope>NUCLEOTIDE SEQUENCE [GENOMIC DNA]</scope>
</reference>
<reference key="2">
    <citation type="journal article" date="1994" name="Nature">
        <title>Complete DNA sequence of yeast chromosome XI.</title>
        <authorList>
            <person name="Dujon B."/>
            <person name="Alexandraki D."/>
            <person name="Andre B."/>
            <person name="Ansorge W."/>
            <person name="Baladron V."/>
            <person name="Ballesta J.P.G."/>
            <person name="Banrevi A."/>
            <person name="Bolle P.-A."/>
            <person name="Bolotin-Fukuhara M."/>
            <person name="Bossier P."/>
            <person name="Bou G."/>
            <person name="Boyer J."/>
            <person name="Buitrago M.J."/>
            <person name="Cheret G."/>
            <person name="Colleaux L."/>
            <person name="Daignan-Fornier B."/>
            <person name="del Rey F."/>
            <person name="Dion C."/>
            <person name="Domdey H."/>
            <person name="Duesterhoeft A."/>
            <person name="Duesterhus S."/>
            <person name="Entian K.-D."/>
            <person name="Erfle H."/>
            <person name="Esteban P.F."/>
            <person name="Feldmann H."/>
            <person name="Fernandes L."/>
            <person name="Fobo G.M."/>
            <person name="Fritz C."/>
            <person name="Fukuhara H."/>
            <person name="Gabel C."/>
            <person name="Gaillon L."/>
            <person name="Garcia-Cantalejo J.M."/>
            <person name="Garcia-Ramirez J.J."/>
            <person name="Gent M.E."/>
            <person name="Ghazvini M."/>
            <person name="Goffeau A."/>
            <person name="Gonzalez A."/>
            <person name="Grothues D."/>
            <person name="Guerreiro P."/>
            <person name="Hegemann J.H."/>
            <person name="Hewitt N."/>
            <person name="Hilger F."/>
            <person name="Hollenberg C.P."/>
            <person name="Horaitis O."/>
            <person name="Indge K.J."/>
            <person name="Jacquier A."/>
            <person name="James C.M."/>
            <person name="Jauniaux J.-C."/>
            <person name="Jimenez A."/>
            <person name="Keuchel H."/>
            <person name="Kirchrath L."/>
            <person name="Kleine K."/>
            <person name="Koetter P."/>
            <person name="Legrain P."/>
            <person name="Liebl S."/>
            <person name="Louis E.J."/>
            <person name="Maia e Silva A."/>
            <person name="Marck C."/>
            <person name="Monnier A.-L."/>
            <person name="Moestl D."/>
            <person name="Mueller S."/>
            <person name="Obermaier B."/>
            <person name="Oliver S.G."/>
            <person name="Pallier C."/>
            <person name="Pascolo S."/>
            <person name="Pfeiffer F."/>
            <person name="Philippsen P."/>
            <person name="Planta R.J."/>
            <person name="Pohl F.M."/>
            <person name="Pohl T.M."/>
            <person name="Poehlmann R."/>
            <person name="Portetelle D."/>
            <person name="Purnelle B."/>
            <person name="Puzos V."/>
            <person name="Ramezani Rad M."/>
            <person name="Rasmussen S.W."/>
            <person name="Remacha M.A."/>
            <person name="Revuelta J.L."/>
            <person name="Richard G.-F."/>
            <person name="Rieger M."/>
            <person name="Rodrigues-Pousada C."/>
            <person name="Rose M."/>
            <person name="Rupp T."/>
            <person name="Santos M.A."/>
            <person name="Schwager C."/>
            <person name="Sensen C."/>
            <person name="Skala J."/>
            <person name="Soares H."/>
            <person name="Sor F."/>
            <person name="Stegemann J."/>
            <person name="Tettelin H."/>
            <person name="Thierry A."/>
            <person name="Tzermia M."/>
            <person name="Urrestarazu L.A."/>
            <person name="van Dyck L."/>
            <person name="van Vliet-Reedijk J.C."/>
            <person name="Valens M."/>
            <person name="Vandenbol M."/>
            <person name="Vilela C."/>
            <person name="Vissers S."/>
            <person name="von Wettstein D."/>
            <person name="Voss H."/>
            <person name="Wiemann S."/>
            <person name="Xu G."/>
            <person name="Zimmermann J."/>
            <person name="Haasemann M."/>
            <person name="Becker I."/>
            <person name="Mewes H.-W."/>
        </authorList>
    </citation>
    <scope>NUCLEOTIDE SEQUENCE [LARGE SCALE GENOMIC DNA]</scope>
    <source>
        <strain>ATCC 204508 / S288c</strain>
    </source>
</reference>
<reference key="3">
    <citation type="journal article" date="2014" name="G3 (Bethesda)">
        <title>The reference genome sequence of Saccharomyces cerevisiae: Then and now.</title>
        <authorList>
            <person name="Engel S.R."/>
            <person name="Dietrich F.S."/>
            <person name="Fisk D.G."/>
            <person name="Binkley G."/>
            <person name="Balakrishnan R."/>
            <person name="Costanzo M.C."/>
            <person name="Dwight S.S."/>
            <person name="Hitz B.C."/>
            <person name="Karra K."/>
            <person name="Nash R.S."/>
            <person name="Weng S."/>
            <person name="Wong E.D."/>
            <person name="Lloyd P."/>
            <person name="Skrzypek M.S."/>
            <person name="Miyasato S.R."/>
            <person name="Simison M."/>
            <person name="Cherry J.M."/>
        </authorList>
    </citation>
    <scope>GENOME REANNOTATION</scope>
    <source>
        <strain>ATCC 204508 / S288c</strain>
    </source>
</reference>
<reference key="4">
    <citation type="journal article" date="2003" name="Nature">
        <title>Global analysis of protein localization in budding yeast.</title>
        <authorList>
            <person name="Huh W.-K."/>
            <person name="Falvo J.V."/>
            <person name="Gerke L.C."/>
            <person name="Carroll A.S."/>
            <person name="Howson R.W."/>
            <person name="Weissman J.S."/>
            <person name="O'Shea E.K."/>
        </authorList>
    </citation>
    <scope>SUBCELLULAR LOCATION [LARGE SCALE ANALYSIS]</scope>
</reference>
<reference key="5">
    <citation type="journal article" date="2003" name="Nature">
        <title>Global analysis of protein expression in yeast.</title>
        <authorList>
            <person name="Ghaemmaghami S."/>
            <person name="Huh W.-K."/>
            <person name="Bower K."/>
            <person name="Howson R.W."/>
            <person name="Belle A."/>
            <person name="Dephoure N."/>
            <person name="O'Shea E.K."/>
            <person name="Weissman J.S."/>
        </authorList>
    </citation>
    <scope>LEVEL OF PROTEIN EXPRESSION [LARGE SCALE ANALYSIS]</scope>
</reference>
<reference key="6">
    <citation type="journal article" date="2004" name="Genetics">
        <title>Genetic and biochemical interactions among Yar1, Ltv1 and Rps3 define novel links between environmental stress and ribosome biogenesis in Saccharomyces cerevisiae.</title>
        <authorList>
            <person name="Loar J.W."/>
            <person name="Seiser R.M."/>
            <person name="Sundberg A.E."/>
            <person name="Sagerson H.J."/>
            <person name="Ilias N."/>
            <person name="Zobel-Thropp P."/>
            <person name="Craig E.A."/>
            <person name="Lycan D.E."/>
        </authorList>
    </citation>
    <scope>FUNCTION</scope>
</reference>
<reference key="7">
    <citation type="journal article" date="2006" name="Nature">
        <title>Hrr25-dependent phosphorylation state regulates organization of the pre-40S subunit.</title>
        <authorList>
            <person name="Schaefer T."/>
            <person name="Maco B."/>
            <person name="Petfalski E."/>
            <person name="Tollervey D."/>
            <person name="Boettcher B."/>
            <person name="Aebi U."/>
            <person name="Hurt E."/>
        </authorList>
    </citation>
    <scope>IDENTIFICATION BY MASS SPECTROMETRY</scope>
    <scope>INTERACTION WITH THE PRE-40S RIBOSOME</scope>
    <scope>PHOSPHORYLATION</scope>
</reference>
<reference key="8">
    <citation type="journal article" date="2006" name="Nat. Cell Biol.">
        <title>A conserved GTPase-containing complex is required for intracellular sorting of the general amino-acid permease in yeast.</title>
        <authorList>
            <person name="Gao M."/>
            <person name="Kaiser C.A."/>
        </authorList>
    </citation>
    <scope>IDENTIFICATION BY MASS SPECTROMETRY</scope>
    <scope>IDENTIFICATION IN THE GSE COMPLEX</scope>
    <scope>INTERACTION WITH GTR1</scope>
</reference>
<reference key="9">
    <citation type="journal article" date="2006" name="Genetics">
        <title>Ltv1 is required for efficient nuclear export of the ribosomal small subunit in Saccharomyces cerevisiae.</title>
        <authorList>
            <person name="Seiser R.M."/>
            <person name="Sundberg A.E."/>
            <person name="Wollam B.J."/>
            <person name="Zobel-Thropp P."/>
            <person name="Baldwin K."/>
            <person name="Spector M.D."/>
            <person name="Lycan D.E."/>
        </authorList>
    </citation>
    <scope>FUNCTION</scope>
    <scope>SUBCELLULAR LOCATION</scope>
    <scope>NUCLEAR EXPORT SIGNAL</scope>
    <scope>INTERACTION WITH CRM1</scope>
</reference>
<reference key="10">
    <citation type="journal article" date="2008" name="Mol. Cell. Proteomics">
        <title>A multidimensional chromatography technology for in-depth phosphoproteome analysis.</title>
        <authorList>
            <person name="Albuquerque C.P."/>
            <person name="Smolka M.B."/>
            <person name="Payne S.H."/>
            <person name="Bafna V."/>
            <person name="Eng J."/>
            <person name="Zhou H."/>
        </authorList>
    </citation>
    <scope>PHOSPHORYLATION [LARGE SCALE ANALYSIS] AT SER-303</scope>
    <scope>IDENTIFICATION BY MASS SPECTROMETRY [LARGE SCALE ANALYSIS]</scope>
</reference>
<reference key="11">
    <citation type="journal article" date="2009" name="Science">
        <title>Global analysis of Cdk1 substrate phosphorylation sites provides insights into evolution.</title>
        <authorList>
            <person name="Holt L.J."/>
            <person name="Tuch B.B."/>
            <person name="Villen J."/>
            <person name="Johnson A.D."/>
            <person name="Gygi S.P."/>
            <person name="Morgan D.O."/>
        </authorList>
    </citation>
    <scope>PHOSPHORYLATION [LARGE SCALE ANALYSIS] AT SER-288; SER-293; SER-299 AND SER-303</scope>
    <scope>IDENTIFICATION BY MASS SPECTROMETRY [LARGE SCALE ANALYSIS]</scope>
</reference>
<reference key="12">
    <citation type="journal article" date="2012" name="Proc. Natl. Acad. Sci. U.S.A.">
        <title>N-terminal acetylome analyses and functional insights of the N-terminal acetyltransferase NatB.</title>
        <authorList>
            <person name="Van Damme P."/>
            <person name="Lasa M."/>
            <person name="Polevoda B."/>
            <person name="Gazquez C."/>
            <person name="Elosegui-Artola A."/>
            <person name="Kim D.S."/>
            <person name="De Juan-Pardo E."/>
            <person name="Demeyer K."/>
            <person name="Hole K."/>
            <person name="Larrea E."/>
            <person name="Timmerman E."/>
            <person name="Prieto J."/>
            <person name="Arnesen T."/>
            <person name="Sherman F."/>
            <person name="Gevaert K."/>
            <person name="Aldabe R."/>
        </authorList>
    </citation>
    <scope>ACETYLATION [LARGE SCALE ANALYSIS] AT SER-2</scope>
    <scope>CLEAVAGE OF INITIATOR METHIONINE [LARGE SCALE ANALYSIS]</scope>
    <scope>IDENTIFICATION BY MASS SPECTROMETRY [LARGE SCALE ANALYSIS]</scope>
</reference>
<dbReference type="EMBL" id="Z25464">
    <property type="protein sequence ID" value="CAA80955.1"/>
    <property type="status" value="ALT_FRAME"/>
    <property type="molecule type" value="Genomic_DNA"/>
</dbReference>
<dbReference type="EMBL" id="Z28143">
    <property type="protein sequence ID" value="CAA81984.1"/>
    <property type="molecule type" value="Genomic_DNA"/>
</dbReference>
<dbReference type="EMBL" id="BK006944">
    <property type="protein sequence ID" value="DAA09019.1"/>
    <property type="molecule type" value="Genomic_DNA"/>
</dbReference>
<dbReference type="PIR" id="S37972">
    <property type="entry name" value="S37972"/>
</dbReference>
<dbReference type="RefSeq" id="NP_012779.1">
    <property type="nucleotide sequence ID" value="NM_001179709.1"/>
</dbReference>
<dbReference type="PDB" id="5WWO">
    <property type="method" value="X-ray"/>
    <property type="resolution" value="2.40 A"/>
    <property type="chains" value="C=333-463"/>
</dbReference>
<dbReference type="PDB" id="6FAI">
    <property type="method" value="EM"/>
    <property type="resolution" value="3.40 A"/>
    <property type="chains" value="j=1-463"/>
</dbReference>
<dbReference type="PDB" id="6Y7C">
    <property type="method" value="EM"/>
    <property type="resolution" value="3.80 A"/>
    <property type="chains" value="j=1-463"/>
</dbReference>
<dbReference type="PDB" id="8CBJ">
    <property type="method" value="EM"/>
    <property type="resolution" value="3.80 A"/>
    <property type="chains" value="j=1-463"/>
</dbReference>
<dbReference type="PDBsum" id="5WWO"/>
<dbReference type="PDBsum" id="6FAI"/>
<dbReference type="PDBsum" id="6Y7C"/>
<dbReference type="PDBsum" id="8CBJ"/>
<dbReference type="EMDB" id="EMD-10713"/>
<dbReference type="EMDB" id="EMD-4214"/>
<dbReference type="SMR" id="P34078"/>
<dbReference type="BioGRID" id="33993">
    <property type="interactions" value="186"/>
</dbReference>
<dbReference type="ComplexPortal" id="CPX-3233">
    <property type="entry name" value="GSE complex"/>
</dbReference>
<dbReference type="DIP" id="DIP-2801N"/>
<dbReference type="FunCoup" id="P34078">
    <property type="interactions" value="558"/>
</dbReference>
<dbReference type="IntAct" id="P34078">
    <property type="interactions" value="17"/>
</dbReference>
<dbReference type="MINT" id="P34078"/>
<dbReference type="STRING" id="4932.YKL143W"/>
<dbReference type="iPTMnet" id="P34078"/>
<dbReference type="PaxDb" id="4932-YKL143W"/>
<dbReference type="PeptideAtlas" id="P34078"/>
<dbReference type="EnsemblFungi" id="YKL143W_mRNA">
    <property type="protein sequence ID" value="YKL143W"/>
    <property type="gene ID" value="YKL143W"/>
</dbReference>
<dbReference type="GeneID" id="853714"/>
<dbReference type="KEGG" id="sce:YKL143W"/>
<dbReference type="AGR" id="SGD:S000001626"/>
<dbReference type="SGD" id="S000001626">
    <property type="gene designation" value="LTV1"/>
</dbReference>
<dbReference type="VEuPathDB" id="FungiDB:YKL143W"/>
<dbReference type="eggNOG" id="KOG2637">
    <property type="taxonomic scope" value="Eukaryota"/>
</dbReference>
<dbReference type="GeneTree" id="ENSGT00390000002789"/>
<dbReference type="HOGENOM" id="CLU_028555_1_0_1"/>
<dbReference type="InParanoid" id="P34078"/>
<dbReference type="OMA" id="TAQHFTL"/>
<dbReference type="OrthoDB" id="5852896at2759"/>
<dbReference type="BioCyc" id="YEAST:G3O-31918-MONOMER"/>
<dbReference type="BioGRID-ORCS" id="853714">
    <property type="hits" value="4 hits in 10 CRISPR screens"/>
</dbReference>
<dbReference type="PRO" id="PR:P34078"/>
<dbReference type="Proteomes" id="UP000002311">
    <property type="component" value="Chromosome XI"/>
</dbReference>
<dbReference type="RNAct" id="P34078">
    <property type="molecule type" value="protein"/>
</dbReference>
<dbReference type="GO" id="GO:0005737">
    <property type="term" value="C:cytoplasm"/>
    <property type="evidence" value="ECO:0000314"/>
    <property type="project" value="SGD"/>
</dbReference>
<dbReference type="GO" id="GO:0005829">
    <property type="term" value="C:cytosol"/>
    <property type="evidence" value="ECO:0000318"/>
    <property type="project" value="GO_Central"/>
</dbReference>
<dbReference type="GO" id="GO:0005770">
    <property type="term" value="C:late endosome"/>
    <property type="evidence" value="ECO:0000314"/>
    <property type="project" value="ComplexPortal"/>
</dbReference>
<dbReference type="GO" id="GO:0031902">
    <property type="term" value="C:late endosome membrane"/>
    <property type="evidence" value="ECO:0000314"/>
    <property type="project" value="SGD"/>
</dbReference>
<dbReference type="GO" id="GO:0005730">
    <property type="term" value="C:nucleolus"/>
    <property type="evidence" value="ECO:0000314"/>
    <property type="project" value="ComplexPortal"/>
</dbReference>
<dbReference type="GO" id="GO:0005634">
    <property type="term" value="C:nucleus"/>
    <property type="evidence" value="ECO:0000314"/>
    <property type="project" value="SGD"/>
</dbReference>
<dbReference type="GO" id="GO:0030688">
    <property type="term" value="C:preribosome, small subunit precursor"/>
    <property type="evidence" value="ECO:0000314"/>
    <property type="project" value="GO_Central"/>
</dbReference>
<dbReference type="GO" id="GO:0071986">
    <property type="term" value="C:Ragulator complex"/>
    <property type="evidence" value="ECO:0000314"/>
    <property type="project" value="SGD"/>
</dbReference>
<dbReference type="GO" id="GO:0032040">
    <property type="term" value="C:small-subunit processome"/>
    <property type="evidence" value="ECO:0000353"/>
    <property type="project" value="ComplexPortal"/>
</dbReference>
<dbReference type="GO" id="GO:1904669">
    <property type="term" value="P:ATP export"/>
    <property type="evidence" value="ECO:0000315"/>
    <property type="project" value="SGD"/>
</dbReference>
<dbReference type="GO" id="GO:0034599">
    <property type="term" value="P:cellular response to oxidative stress"/>
    <property type="evidence" value="ECO:0000315"/>
    <property type="project" value="SGD"/>
</dbReference>
<dbReference type="GO" id="GO:0032456">
    <property type="term" value="P:endocytic recycling"/>
    <property type="evidence" value="ECO:0000314"/>
    <property type="project" value="ComplexPortal"/>
</dbReference>
<dbReference type="GO" id="GO:0030490">
    <property type="term" value="P:maturation of SSU-rRNA"/>
    <property type="evidence" value="ECO:0000303"/>
    <property type="project" value="ComplexPortal"/>
</dbReference>
<dbReference type="GO" id="GO:0015031">
    <property type="term" value="P:protein transport"/>
    <property type="evidence" value="ECO:0007669"/>
    <property type="project" value="UniProtKB-KW"/>
</dbReference>
<dbReference type="GO" id="GO:0006970">
    <property type="term" value="P:response to osmotic stress"/>
    <property type="evidence" value="ECO:0000315"/>
    <property type="project" value="SGD"/>
</dbReference>
<dbReference type="GO" id="GO:0042274">
    <property type="term" value="P:ribosomal small subunit biogenesis"/>
    <property type="evidence" value="ECO:0000315"/>
    <property type="project" value="SGD"/>
</dbReference>
<dbReference type="GO" id="GO:0000056">
    <property type="term" value="P:ribosomal small subunit export from nucleus"/>
    <property type="evidence" value="ECO:0000315"/>
    <property type="project" value="SGD"/>
</dbReference>
<dbReference type="InterPro" id="IPR007307">
    <property type="entry name" value="Ltv1"/>
</dbReference>
<dbReference type="PANTHER" id="PTHR21531">
    <property type="entry name" value="LOW-TEMPERATURE VIABILITY PROTEIN LTV1-RELATED"/>
    <property type="match status" value="1"/>
</dbReference>
<dbReference type="PANTHER" id="PTHR21531:SF0">
    <property type="entry name" value="PROTEIN LTV1 HOMOLOG"/>
    <property type="match status" value="1"/>
</dbReference>
<dbReference type="Pfam" id="PF04180">
    <property type="entry name" value="LTV"/>
    <property type="match status" value="1"/>
</dbReference>
<sequence>MSKKFSSKNSQRYVVVHRPHDDPSFYDTDASAHVLVPVSNPNKTSPEADLRKKDVSSTKPKGRRAHVGEAALYGINFDDSEYDYTQHLKPIGLDPENSIFIASKGNEQKVEKKNIEDLFIEPKYRRDEIEKDDALPVFQRGMAKPEYLLHQQDTTDEIRGFKPDMNPALREVLEALEDEAYVVNDDVVVEDISKKTQLQGDNYGEEEKEDDIFAQLLGSGEAKDEDEFEDEFDEWDIDNVENFEDENYVKEMAQFDNIENLEDLENIDYQADVRRFQKDNSILEKHNSDDEFSNAGLDSVNPSEEEDVLGELPSIQDKSKTGKKKRKSRQKKGAMSDVSGFSMSSSAIARTETMTVLDDQYDQIINGYENYEEELEEDEEQNYQPFDMSAERSDFESMLDDFLDNYELESGGRKLAKKDKEIERLKEAADEVSKGKLSQRRNRERQEKKKLEKVTNTLSSLKF</sequence>